<gene>
    <name type="primary">ybeM</name>
    <name type="ordered locus">Z0771</name>
    <name type="ordered locus">ECs0664</name>
</gene>
<keyword id="KW-0378">Hydrolase</keyword>
<keyword id="KW-1185">Reference proteome</keyword>
<proteinExistence type="inferred from homology"/>
<accession>P58054</accession>
<organism>
    <name type="scientific">Escherichia coli O157:H7</name>
    <dbReference type="NCBI Taxonomy" id="83334"/>
    <lineage>
        <taxon>Bacteria</taxon>
        <taxon>Pseudomonadati</taxon>
        <taxon>Pseudomonadota</taxon>
        <taxon>Gammaproteobacteria</taxon>
        <taxon>Enterobacterales</taxon>
        <taxon>Enterobacteriaceae</taxon>
        <taxon>Escherichia</taxon>
    </lineage>
</organism>
<comment type="function">
    <text evidence="1">Hydrolyzes deaminated glutathione (dGSH) to 2-oxoglutarate and L-cysteinylglycine, and no activity on glutathione or L-glutamine. May function as a metabolite repair enzyme.</text>
</comment>
<comment type="catalytic activity">
    <reaction evidence="1">
        <text>N-(4-oxoglutaryl)-L-cysteinylglycine + H2O = L-cysteinylglycine + 2-oxoglutarate</text>
        <dbReference type="Rhea" id="RHEA:54532"/>
        <dbReference type="ChEBI" id="CHEBI:15377"/>
        <dbReference type="ChEBI" id="CHEBI:16810"/>
        <dbReference type="ChEBI" id="CHEBI:61694"/>
        <dbReference type="ChEBI" id="CHEBI:138256"/>
        <dbReference type="EC" id="3.5.1.128"/>
    </reaction>
</comment>
<comment type="similarity">
    <text evidence="3">Belongs to the carbon-nitrogen hydrolase superfamily. NIT1/NIT2 family.</text>
</comment>
<comment type="sequence caution" evidence="3">
    <conflict type="erroneous initiation">
        <sequence resource="EMBL-CDS" id="AAG54960"/>
    </conflict>
    <text>Truncated N-terminus.</text>
</comment>
<evidence type="ECO:0000250" key="1">
    <source>
        <dbReference type="UniProtKB" id="A0A140NCB4"/>
    </source>
</evidence>
<evidence type="ECO:0000255" key="2">
    <source>
        <dbReference type="PROSITE-ProRule" id="PRU00054"/>
    </source>
</evidence>
<evidence type="ECO:0000305" key="3"/>
<reference key="1">
    <citation type="journal article" date="2001" name="Nature">
        <title>Genome sequence of enterohaemorrhagic Escherichia coli O157:H7.</title>
        <authorList>
            <person name="Perna N.T."/>
            <person name="Plunkett G. III"/>
            <person name="Burland V."/>
            <person name="Mau B."/>
            <person name="Glasner J.D."/>
            <person name="Rose D.J."/>
            <person name="Mayhew G.F."/>
            <person name="Evans P.S."/>
            <person name="Gregor J."/>
            <person name="Kirkpatrick H.A."/>
            <person name="Posfai G."/>
            <person name="Hackett J."/>
            <person name="Klink S."/>
            <person name="Boutin A."/>
            <person name="Shao Y."/>
            <person name="Miller L."/>
            <person name="Grotbeck E.J."/>
            <person name="Davis N.W."/>
            <person name="Lim A."/>
            <person name="Dimalanta E.T."/>
            <person name="Potamousis K."/>
            <person name="Apodaca J."/>
            <person name="Anantharaman T.S."/>
            <person name="Lin J."/>
            <person name="Yen G."/>
            <person name="Schwartz D.C."/>
            <person name="Welch R.A."/>
            <person name="Blattner F.R."/>
        </authorList>
    </citation>
    <scope>NUCLEOTIDE SEQUENCE [LARGE SCALE GENOMIC DNA]</scope>
    <source>
        <strain>O157:H7 / EDL933 / ATCC 700927 / EHEC</strain>
    </source>
</reference>
<reference key="2">
    <citation type="journal article" date="2001" name="DNA Res.">
        <title>Complete genome sequence of enterohemorrhagic Escherichia coli O157:H7 and genomic comparison with a laboratory strain K-12.</title>
        <authorList>
            <person name="Hayashi T."/>
            <person name="Makino K."/>
            <person name="Ohnishi M."/>
            <person name="Kurokawa K."/>
            <person name="Ishii K."/>
            <person name="Yokoyama K."/>
            <person name="Han C.-G."/>
            <person name="Ohtsubo E."/>
            <person name="Nakayama K."/>
            <person name="Murata T."/>
            <person name="Tanaka M."/>
            <person name="Tobe T."/>
            <person name="Iida T."/>
            <person name="Takami H."/>
            <person name="Honda T."/>
            <person name="Sasakawa C."/>
            <person name="Ogasawara N."/>
            <person name="Yasunaga T."/>
            <person name="Kuhara S."/>
            <person name="Shiba T."/>
            <person name="Hattori M."/>
            <person name="Shinagawa H."/>
        </authorList>
    </citation>
    <scope>NUCLEOTIDE SEQUENCE [LARGE SCALE GENOMIC DNA]</scope>
    <source>
        <strain>O157:H7 / Sakai / RIMD 0509952 / EHEC</strain>
    </source>
</reference>
<feature type="chain" id="PRO_0000213259" description="Deaminated glutathione amidase">
    <location>
        <begin position="1"/>
        <end position="262"/>
    </location>
</feature>
<feature type="domain" description="CN hydrolase" evidence="2">
    <location>
        <begin position="1"/>
        <end position="238"/>
    </location>
</feature>
<feature type="active site" description="Proton acceptor" evidence="2">
    <location>
        <position position="40"/>
    </location>
</feature>
<feature type="active site" description="Proton donor" evidence="2">
    <location>
        <position position="110"/>
    </location>
</feature>
<feature type="active site" description="Nucleophile" evidence="2">
    <location>
        <position position="147"/>
    </location>
</feature>
<protein>
    <recommendedName>
        <fullName evidence="1">Deaminated glutathione amidase</fullName>
        <shortName evidence="1">dGSH amidase</shortName>
        <ecNumber evidence="1">3.5.1.128</ecNumber>
    </recommendedName>
    <alternativeName>
        <fullName>Nitrilase homolog 1</fullName>
    </alternativeName>
</protein>
<name>YBEM_ECO57</name>
<dbReference type="EC" id="3.5.1.128" evidence="1"/>
<dbReference type="EMBL" id="AE005174">
    <property type="protein sequence ID" value="AAG54960.1"/>
    <property type="status" value="ALT_INIT"/>
    <property type="molecule type" value="Genomic_DNA"/>
</dbReference>
<dbReference type="EMBL" id="BA000007">
    <property type="protein sequence ID" value="BAB34087.1"/>
    <property type="molecule type" value="Genomic_DNA"/>
</dbReference>
<dbReference type="PIR" id="D85562">
    <property type="entry name" value="D85562"/>
</dbReference>
<dbReference type="PIR" id="H90711">
    <property type="entry name" value="H90711"/>
</dbReference>
<dbReference type="RefSeq" id="NP_308691.1">
    <property type="nucleotide sequence ID" value="NC_002695.1"/>
</dbReference>
<dbReference type="RefSeq" id="WP_000959109.1">
    <property type="nucleotide sequence ID" value="NZ_VOAI01000012.1"/>
</dbReference>
<dbReference type="SMR" id="P58054"/>
<dbReference type="STRING" id="155864.Z0771"/>
<dbReference type="GeneID" id="917024"/>
<dbReference type="KEGG" id="ece:Z0771"/>
<dbReference type="KEGG" id="ecs:ECs_0664"/>
<dbReference type="PATRIC" id="fig|386585.9.peg.775"/>
<dbReference type="eggNOG" id="COG0388">
    <property type="taxonomic scope" value="Bacteria"/>
</dbReference>
<dbReference type="HOGENOM" id="CLU_030130_1_2_6"/>
<dbReference type="OMA" id="MRVAVCQ"/>
<dbReference type="Proteomes" id="UP000000558">
    <property type="component" value="Chromosome"/>
</dbReference>
<dbReference type="Proteomes" id="UP000002519">
    <property type="component" value="Chromosome"/>
</dbReference>
<dbReference type="GO" id="GO:0110050">
    <property type="term" value="F:deaminated glutathione amidase activity"/>
    <property type="evidence" value="ECO:0007669"/>
    <property type="project" value="UniProtKB-EC"/>
</dbReference>
<dbReference type="CDD" id="cd07581">
    <property type="entry name" value="nitrilase_3"/>
    <property type="match status" value="1"/>
</dbReference>
<dbReference type="Gene3D" id="3.60.110.10">
    <property type="entry name" value="Carbon-nitrogen hydrolase"/>
    <property type="match status" value="1"/>
</dbReference>
<dbReference type="InterPro" id="IPR003010">
    <property type="entry name" value="C-N_Hydrolase"/>
</dbReference>
<dbReference type="InterPro" id="IPR036526">
    <property type="entry name" value="C-N_Hydrolase_sf"/>
</dbReference>
<dbReference type="InterPro" id="IPR047999">
    <property type="entry name" value="De_GSH_amidase"/>
</dbReference>
<dbReference type="InterPro" id="IPR001110">
    <property type="entry name" value="UPF0012_CS"/>
</dbReference>
<dbReference type="NCBIfam" id="NF033621">
    <property type="entry name" value="de_GSH_amidase"/>
    <property type="match status" value="1"/>
</dbReference>
<dbReference type="PANTHER" id="PTHR23088:SF27">
    <property type="entry name" value="DEAMINATED GLUTATHIONE AMIDASE"/>
    <property type="match status" value="1"/>
</dbReference>
<dbReference type="PANTHER" id="PTHR23088">
    <property type="entry name" value="NITRILASE-RELATED"/>
    <property type="match status" value="1"/>
</dbReference>
<dbReference type="Pfam" id="PF00795">
    <property type="entry name" value="CN_hydrolase"/>
    <property type="match status" value="1"/>
</dbReference>
<dbReference type="SUPFAM" id="SSF56317">
    <property type="entry name" value="Carbon-nitrogen hydrolase"/>
    <property type="match status" value="1"/>
</dbReference>
<dbReference type="PROSITE" id="PS50263">
    <property type="entry name" value="CN_HYDROLASE"/>
    <property type="match status" value="1"/>
</dbReference>
<dbReference type="PROSITE" id="PS01227">
    <property type="entry name" value="UPF0012"/>
    <property type="match status" value="1"/>
</dbReference>
<sequence>MLVAAGQFAVTSVWEKNAEICASLMAQAAENDVSLFVLPEALLARDDHDADLSVKSAQLLEGEFLGRLRRESKRNMMTTILTIHVPSTPGRAWNMLVALQAGNIVARYAKLHLYDAFAIQESRRVDAGNEIAPLLEVEGMKVGLMTCYDLRFPELALAQALQGAEILVLPAAWVRGPLKEHHWSTLLAARALDTTCYMVAAGECGNKNIGQSRIIDPFGVTIAAASEMPALIMAEVTPERVRQVRAQLPVLNNRRFAPPQLL</sequence>